<proteinExistence type="evidence at protein level"/>
<accession>Q2I2Q5</accession>
<keyword id="KW-0903">Direct protein sequencing</keyword>
<keyword id="KW-1015">Disulfide bond</keyword>
<keyword id="KW-0301">Gamma-carboxyglutamic acid</keyword>
<keyword id="KW-0379">Hydroxylation</keyword>
<keyword id="KW-0528">Neurotoxin</keyword>
<keyword id="KW-0964">Secreted</keyword>
<keyword id="KW-0732">Signal</keyword>
<keyword id="KW-0800">Toxin</keyword>
<feature type="signal peptide" evidence="2">
    <location>
        <begin position="1"/>
        <end position="20"/>
    </location>
</feature>
<feature type="propeptide" id="PRO_0000315525" evidence="3">
    <location>
        <begin position="21"/>
        <end position="52"/>
    </location>
</feature>
<feature type="peptide" id="PRO_0000315526" description="Iota-conotoxin LtIIIA">
    <location>
        <begin position="53"/>
        <end position="69"/>
    </location>
</feature>
<feature type="modified residue" description="4-carboxyglutamate" evidence="5">
    <location>
        <position position="54"/>
    </location>
</feature>
<feature type="modified residue" description="4-carboxyglutamate" evidence="5">
    <location>
        <position position="57"/>
    </location>
</feature>
<feature type="modified residue" description="4-hydroxyproline" evidence="3">
    <location>
        <position position="58"/>
    </location>
</feature>
<feature type="disulfide bond" evidence="1">
    <location>
        <begin position="55"/>
        <end position="67"/>
    </location>
</feature>
<feature type="disulfide bond" evidence="1">
    <location>
        <begin position="56"/>
        <end position="65"/>
    </location>
</feature>
<feature type="disulfide bond" evidence="1">
    <location>
        <begin position="61"/>
        <end position="68"/>
    </location>
</feature>
<evidence type="ECO:0000250" key="1">
    <source>
        <dbReference type="UniProtKB" id="Q5EHP3"/>
    </source>
</evidence>
<evidence type="ECO:0000255" key="2"/>
<evidence type="ECO:0000269" key="3">
    <source>
    </source>
</evidence>
<evidence type="ECO:0000305" key="4"/>
<evidence type="ECO:0000305" key="5">
    <source>
    </source>
</evidence>
<comment type="function">
    <text evidence="3">Iota-conotoxins bind to voltage-gated sodium channels and act as agonists by shifting the voltage-dependence of activation to more hyperpolarized levels. This toxin enhances tetrodotoxin-sensitive sodium current in rat dorsal root ganglion neurons.</text>
</comment>
<comment type="subcellular location">
    <subcellularLocation>
        <location evidence="3">Secreted</location>
    </subcellularLocation>
</comment>
<comment type="tissue specificity">
    <text evidence="5">Expressed by the venom duct.</text>
</comment>
<comment type="domain">
    <text evidence="4">The cysteine framework is III (CC-C-C-CC). Classified in the M-1 branch, since 1 residue stands between the fourth and the fifth cysteine residues.</text>
</comment>
<comment type="mass spectrometry" mass="1964.85" method="MALDI" evidence="3"/>
<comment type="similarity">
    <text evidence="4">Belongs to the conotoxin M superfamily.</text>
</comment>
<organism>
    <name type="scientific">Conus litteratus</name>
    <name type="common">Lettered cone</name>
    <dbReference type="NCBI Taxonomy" id="89445"/>
    <lineage>
        <taxon>Eukaryota</taxon>
        <taxon>Metazoa</taxon>
        <taxon>Spiralia</taxon>
        <taxon>Lophotrochozoa</taxon>
        <taxon>Mollusca</taxon>
        <taxon>Gastropoda</taxon>
        <taxon>Caenogastropoda</taxon>
        <taxon>Neogastropoda</taxon>
        <taxon>Conoidea</taxon>
        <taxon>Conidae</taxon>
        <taxon>Conus</taxon>
        <taxon>Elisaconus</taxon>
    </lineage>
</organism>
<dbReference type="EMBL" id="DQ345377">
    <property type="protein sequence ID" value="ABC74985.1"/>
    <property type="molecule type" value="mRNA"/>
</dbReference>
<dbReference type="TCDB" id="8.B.28.1.8">
    <property type="family name" value="the mu-conotoxin (mu-conotoxin) family"/>
</dbReference>
<dbReference type="ConoServer" id="1163">
    <property type="toxin name" value="LtIIIA precursor"/>
</dbReference>
<dbReference type="GO" id="GO:0005576">
    <property type="term" value="C:extracellular region"/>
    <property type="evidence" value="ECO:0000314"/>
    <property type="project" value="UniProtKB"/>
</dbReference>
<dbReference type="GO" id="GO:0008200">
    <property type="term" value="F:ion channel inhibitor activity"/>
    <property type="evidence" value="ECO:0007669"/>
    <property type="project" value="InterPro"/>
</dbReference>
<dbReference type="GO" id="GO:0090729">
    <property type="term" value="F:toxin activity"/>
    <property type="evidence" value="ECO:0000314"/>
    <property type="project" value="UniProtKB"/>
</dbReference>
<dbReference type="GO" id="GO:0044494">
    <property type="term" value="P:envenomation resulting in positive regulation of voltage-gated sodium channel activity in another organism"/>
    <property type="evidence" value="ECO:0000314"/>
    <property type="project" value="UniProtKB"/>
</dbReference>
<dbReference type="InterPro" id="IPR004214">
    <property type="entry name" value="Conotoxin"/>
</dbReference>
<dbReference type="Pfam" id="PF02950">
    <property type="entry name" value="Conotoxin"/>
    <property type="match status" value="1"/>
</dbReference>
<protein>
    <recommendedName>
        <fullName>Iota-conotoxin LtIIIA</fullName>
    </recommendedName>
    <alternativeName>
        <fullName>Lt3.1</fullName>
    </alternativeName>
    <alternativeName>
        <fullName>Lt3a</fullName>
    </alternativeName>
</protein>
<reference key="1">
    <citation type="journal article" date="2006" name="Genomics">
        <title>Diversity and evolution of conotoxins based on gene expression profiling of Conus litteratus.</title>
        <authorList>
            <person name="Pi C."/>
            <person name="Liu J."/>
            <person name="Peng C."/>
            <person name="Liu Y."/>
            <person name="Jiang X."/>
            <person name="Zhao Y."/>
            <person name="Tang S."/>
            <person name="Wang L."/>
            <person name="Dong M."/>
            <person name="Chen S."/>
            <person name="Xu A."/>
        </authorList>
    </citation>
    <scope>NUCLEOTIDE SEQUENCE [MRNA]</scope>
    <source>
        <tissue>Venom duct</tissue>
    </source>
</reference>
<reference key="2">
    <citation type="journal article" date="2009" name="Arch. Toxicol.">
        <title>Identification of a novel M-superfamily conotoxin with the ability to enhance tetrodotoxin sensitive sodium currents.</title>
        <authorList>
            <person name="Wang L."/>
            <person name="Liu J."/>
            <person name="Pi C."/>
            <person name="Zeng X."/>
            <person name="Zhou M."/>
            <person name="Jiang X."/>
            <person name="Chen S."/>
            <person name="Ren Z."/>
            <person name="Xu A."/>
        </authorList>
    </citation>
    <scope>PROTEIN SEQUENCE OF 53-69</scope>
    <scope>FUNCTION</scope>
    <scope>SUBCELLULAR LOCATION</scope>
    <scope>MASS SPECTROMETRY</scope>
    <scope>GAMMA-CARBOXYGLUTAMATION AT GLU-54 AND GLU-57</scope>
    <scope>HYDROXYLATION AT PRO-58</scope>
    <source>
        <tissue>Venom</tissue>
    </source>
</reference>
<sequence length="69" mass="7931">MLKMGVLLFTFLVLFPLTTLELDTDRPVERHAAIKQDLKPQERRGIRLHAPRDECCEPQWCDGACDCCS</sequence>
<name>CM31_CONLT</name>